<feature type="initiator methionine" description="Removed" evidence="1">
    <location>
        <position position="1"/>
    </location>
</feature>
<feature type="chain" id="PRO_0000071937" description="Histone H2B-alpha">
    <location>
        <begin position="2"/>
        <end position="126"/>
    </location>
</feature>
<feature type="region of interest" description="Disordered" evidence="2">
    <location>
        <begin position="1"/>
        <end position="34"/>
    </location>
</feature>
<feature type="compositionally biased region" description="Basic and acidic residues" evidence="2">
    <location>
        <begin position="17"/>
        <end position="27"/>
    </location>
</feature>
<feature type="modified residue" description="N6-acetyllysine; alternate" evidence="1">
    <location>
        <position position="6"/>
    </location>
</feature>
<feature type="modified residue" description="N6-acetyllysine; alternate" evidence="1">
    <location>
        <position position="7"/>
    </location>
</feature>
<feature type="modified residue" description="Phosphoserine" evidence="1">
    <location>
        <position position="10"/>
    </location>
</feature>
<feature type="modified residue" description="N6-acetyllysine" evidence="1">
    <location>
        <position position="11"/>
    </location>
</feature>
<feature type="cross-link" description="Glycyl lysine isopeptide (Lys-Gly) (interchain with G-Cter in SUMO); alternate" evidence="1">
    <location>
        <position position="6"/>
    </location>
</feature>
<feature type="cross-link" description="Glycyl lysine isopeptide (Lys-Gly) (interchain with G-Cter in SUMO); alternate" evidence="1">
    <location>
        <position position="7"/>
    </location>
</feature>
<feature type="cross-link" description="Glycyl lysine isopeptide (Lys-Gly) (interchain with G-Cter in ubiquitin)" evidence="4">
    <location>
        <position position="120"/>
    </location>
</feature>
<feature type="mutagenesis site" description="In HTB1-442; impairs growth at 36 degrees Celsius." evidence="4">
    <original>E</original>
    <variation>K</variation>
    <location>
        <position position="35"/>
    </location>
</feature>
<feature type="mutagenesis site" description="In HTB1-72; impairs growth at 36 degrees Celsius, leads to chromosome missegregetion, chromatin shrinkage, and diminished chromatin silencing." evidence="4">
    <original>G</original>
    <variation>D</variation>
    <location>
        <position position="53"/>
    </location>
</feature>
<feature type="mutagenesis site" description="In HTB1-223; impairs growth at 36 degrees Celsius, leads to chromosome missegregetion, chromatin shrinkage, histone H2B deubiquitination and diminished chromatin silencing." evidence="4">
    <original>P</original>
    <variation>L</variation>
    <location>
        <position position="103"/>
    </location>
</feature>
<feature type="mutagenesis site" description="Impairs ubiquitination." evidence="4">
    <original>K</original>
    <variation>R</variation>
    <location>
        <position position="120"/>
    </location>
</feature>
<feature type="sequence conflict" description="In Ref. 1 and 2." evidence="6" ref="1 2">
    <original>K</original>
    <variation>R</variation>
    <location>
        <position position="43"/>
    </location>
</feature>
<feature type="sequence conflict" description="In Ref. 1 and 2." evidence="6" ref="1 2">
    <original>R</original>
    <variation>P</variation>
    <location>
        <position position="60"/>
    </location>
</feature>
<feature type="helix" evidence="7">
    <location>
        <begin position="38"/>
        <end position="48"/>
    </location>
</feature>
<feature type="strand" evidence="7">
    <location>
        <begin position="53"/>
        <end position="55"/>
    </location>
</feature>
<feature type="helix" evidence="7">
    <location>
        <begin position="56"/>
        <end position="83"/>
    </location>
</feature>
<feature type="strand" evidence="7">
    <location>
        <begin position="87"/>
        <end position="89"/>
    </location>
</feature>
<feature type="helix" evidence="7">
    <location>
        <begin position="91"/>
        <end position="101"/>
    </location>
</feature>
<feature type="helix" evidence="7">
    <location>
        <begin position="104"/>
        <end position="123"/>
    </location>
</feature>
<feature type="turn" evidence="7">
    <location>
        <begin position="124"/>
        <end position="126"/>
    </location>
</feature>
<evidence type="ECO:0000250" key="1"/>
<evidence type="ECO:0000256" key="2">
    <source>
        <dbReference type="SAM" id="MobiDB-lite"/>
    </source>
</evidence>
<evidence type="ECO:0000269" key="3">
    <source>
    </source>
</evidence>
<evidence type="ECO:0000269" key="4">
    <source>
    </source>
</evidence>
<evidence type="ECO:0000269" key="5">
    <source>
    </source>
</evidence>
<evidence type="ECO:0000305" key="6"/>
<evidence type="ECO:0007829" key="7">
    <source>
        <dbReference type="PDB" id="7YBF"/>
    </source>
</evidence>
<sequence>MSAAEKKPASKAPAGKAPRDTMKSADKKRGKNRKETYSSYIYKVLKQVHPDTGISNQAMRILNSFVNDIFERIATEASKLAAYNKKSTISSREIQTAVRLILPGELAKHAVTEGTKSVTKYSSSAQ</sequence>
<keyword id="KW-0002">3D-structure</keyword>
<keyword id="KW-0007">Acetylation</keyword>
<keyword id="KW-0158">Chromosome</keyword>
<keyword id="KW-0903">Direct protein sequencing</keyword>
<keyword id="KW-0238">DNA-binding</keyword>
<keyword id="KW-1017">Isopeptide bond</keyword>
<keyword id="KW-0544">Nucleosome core</keyword>
<keyword id="KW-0539">Nucleus</keyword>
<keyword id="KW-0597">Phosphoprotein</keyword>
<keyword id="KW-1185">Reference proteome</keyword>
<keyword id="KW-0832">Ubl conjugation</keyword>
<gene>
    <name type="primary">htb1</name>
    <name type="ORF">SPCC622.09</name>
</gene>
<protein>
    <recommendedName>
        <fullName>Histone H2B-alpha</fullName>
    </recommendedName>
    <alternativeName>
        <fullName>H2B.1</fullName>
    </alternativeName>
</protein>
<comment type="function">
    <text>Core component of nucleosome. Nucleosomes wrap and compact DNA into chromatin, limiting DNA accessibility to the cellular machineries which require DNA as a template. Histones thereby play a central role in transcription regulation, DNA repair, DNA replication and chromosomal stability. DNA accessibility is regulated via a complex set of post-translational modifications of histones, also called histone code, and nucleosome remodeling.</text>
</comment>
<comment type="subunit">
    <text evidence="3">The nucleosome is a histone octamer containing two molecules each of H2A, H2B, H3 and H4 assembled in one H3-H4 heterotetramer and two H2A-H2B heterodimers. The octamer wraps approximately 147 bp of DNA. Interacts with rik1.</text>
</comment>
<comment type="interaction">
    <interactant intactId="EBI-1112091">
        <id>P04913</id>
    </interactant>
    <interactant intactId="EBI-1111936">
        <id>Q10426</id>
        <label>rik1</label>
    </interactant>
    <organismsDiffer>false</organismsDiffer>
    <experiments>2</experiments>
</comment>
<comment type="subcellular location">
    <subcellularLocation>
        <location evidence="5">Nucleus</location>
    </subcellularLocation>
    <subcellularLocation>
        <location evidence="5">Chromosome</location>
    </subcellularLocation>
</comment>
<comment type="PTM">
    <text evidence="1">Monoubiquitinated by the rhp6/ubc2-bre1 complex to form H2BK123ub1. H2BK123ub1 gives a specific tag for epigenetic transcriptional activation and is also prerequisite for H3K4me and H3K79me formation. H2BK123ub1 also modulates the formation of double-strand breaks during meiosis and is a prerequisite for DNA-damage checkpoint activation (By similarity).</text>
</comment>
<comment type="PTM">
    <text evidence="1">Phosphorylated by shk1 to form H2BS10ph during progression through meiotic prophase. May be correlated with chromosome condensation (By similarity).</text>
</comment>
<comment type="PTM">
    <text evidence="1">Acetylation of N-terminal lysines and particularly formation of H2BK11ac has a positive effect on transcription.</text>
</comment>
<comment type="PTM">
    <text evidence="1">Sumoylation to form H2BK6su or H2BK7su occurs preferentially near the telomeres and represses gene transcription.</text>
</comment>
<comment type="similarity">
    <text evidence="6">Belongs to the histone H2B family.</text>
</comment>
<comment type="caution">
    <text evidence="6">To ensure consistency between histone entries, we follow the 'Brno' nomenclature for histone modifications, with positions referring to those used in the literature for the 'closest' model organism. Due to slight variations in histone sequences between organisms and to the presence of initiator methionine in UniProtKB/Swiss-Prot sequences, the actual positions of modified amino acids in the sequence generally differ. In this entry the following conventions are used: H2BK6ac = acetylated Lys-6; H2BK6su = sumoylated Lys-6; H2BK7ac = acetylated Lys-7; H2BK7su = sumoylated Lys-7; H2BS10ph = phosphorylated Ser-10; H2BK11ac = acetylated Lys-11; H2BK123ub1 = monoubiquitinated Lys-120.</text>
</comment>
<name>H2B1_SCHPO</name>
<reference key="1">
    <citation type="journal article" date="1985" name="Mol. Cell. Biol.">
        <title>Organization, primary structure, and evolution of histone H2A and H2B genes of the fission yeast Schizosaccharomyces pombe.</title>
        <authorList>
            <person name="Choe J."/>
            <person name="Schuster T."/>
            <person name="Grunstein M."/>
        </authorList>
    </citation>
    <scope>NUCLEOTIDE SEQUENCE [GENOMIC DNA]</scope>
</reference>
<reference key="2">
    <citation type="journal article" date="1985" name="EMBO J.">
        <title>Histone gene organization of fission yeast: a common upstream sequence.</title>
        <authorList>
            <person name="Matsumoto S."/>
            <person name="Yanagida M."/>
        </authorList>
    </citation>
    <scope>NUCLEOTIDE SEQUENCE [GENOMIC DNA]</scope>
</reference>
<reference key="3">
    <citation type="journal article" date="2002" name="Nature">
        <title>The genome sequence of Schizosaccharomyces pombe.</title>
        <authorList>
            <person name="Wood V."/>
            <person name="Gwilliam R."/>
            <person name="Rajandream M.A."/>
            <person name="Lyne M.H."/>
            <person name="Lyne R."/>
            <person name="Stewart A."/>
            <person name="Sgouros J.G."/>
            <person name="Peat N."/>
            <person name="Hayles J."/>
            <person name="Baker S.G."/>
            <person name="Basham D."/>
            <person name="Bowman S."/>
            <person name="Brooks K."/>
            <person name="Brown D."/>
            <person name="Brown S."/>
            <person name="Chillingworth T."/>
            <person name="Churcher C.M."/>
            <person name="Collins M."/>
            <person name="Connor R."/>
            <person name="Cronin A."/>
            <person name="Davis P."/>
            <person name="Feltwell T."/>
            <person name="Fraser A."/>
            <person name="Gentles S."/>
            <person name="Goble A."/>
            <person name="Hamlin N."/>
            <person name="Harris D.E."/>
            <person name="Hidalgo J."/>
            <person name="Hodgson G."/>
            <person name="Holroyd S."/>
            <person name="Hornsby T."/>
            <person name="Howarth S."/>
            <person name="Huckle E.J."/>
            <person name="Hunt S."/>
            <person name="Jagels K."/>
            <person name="James K.D."/>
            <person name="Jones L."/>
            <person name="Jones M."/>
            <person name="Leather S."/>
            <person name="McDonald S."/>
            <person name="McLean J."/>
            <person name="Mooney P."/>
            <person name="Moule S."/>
            <person name="Mungall K.L."/>
            <person name="Murphy L.D."/>
            <person name="Niblett D."/>
            <person name="Odell C."/>
            <person name="Oliver K."/>
            <person name="O'Neil S."/>
            <person name="Pearson D."/>
            <person name="Quail M.A."/>
            <person name="Rabbinowitsch E."/>
            <person name="Rutherford K.M."/>
            <person name="Rutter S."/>
            <person name="Saunders D."/>
            <person name="Seeger K."/>
            <person name="Sharp S."/>
            <person name="Skelton J."/>
            <person name="Simmonds M.N."/>
            <person name="Squares R."/>
            <person name="Squares S."/>
            <person name="Stevens K."/>
            <person name="Taylor K."/>
            <person name="Taylor R.G."/>
            <person name="Tivey A."/>
            <person name="Walsh S.V."/>
            <person name="Warren T."/>
            <person name="Whitehead S."/>
            <person name="Woodward J.R."/>
            <person name="Volckaert G."/>
            <person name="Aert R."/>
            <person name="Robben J."/>
            <person name="Grymonprez B."/>
            <person name="Weltjens I."/>
            <person name="Vanstreels E."/>
            <person name="Rieger M."/>
            <person name="Schaefer M."/>
            <person name="Mueller-Auer S."/>
            <person name="Gabel C."/>
            <person name="Fuchs M."/>
            <person name="Duesterhoeft A."/>
            <person name="Fritzc C."/>
            <person name="Holzer E."/>
            <person name="Moestl D."/>
            <person name="Hilbert H."/>
            <person name="Borzym K."/>
            <person name="Langer I."/>
            <person name="Beck A."/>
            <person name="Lehrach H."/>
            <person name="Reinhardt R."/>
            <person name="Pohl T.M."/>
            <person name="Eger P."/>
            <person name="Zimmermann W."/>
            <person name="Wedler H."/>
            <person name="Wambutt R."/>
            <person name="Purnelle B."/>
            <person name="Goffeau A."/>
            <person name="Cadieu E."/>
            <person name="Dreano S."/>
            <person name="Gloux S."/>
            <person name="Lelaure V."/>
            <person name="Mottier S."/>
            <person name="Galibert F."/>
            <person name="Aves S.J."/>
            <person name="Xiang Z."/>
            <person name="Hunt C."/>
            <person name="Moore K."/>
            <person name="Hurst S.M."/>
            <person name="Lucas M."/>
            <person name="Rochet M."/>
            <person name="Gaillardin C."/>
            <person name="Tallada V.A."/>
            <person name="Garzon A."/>
            <person name="Thode G."/>
            <person name="Daga R.R."/>
            <person name="Cruzado L."/>
            <person name="Jimenez J."/>
            <person name="Sanchez M."/>
            <person name="del Rey F."/>
            <person name="Benito J."/>
            <person name="Dominguez A."/>
            <person name="Revuelta J.L."/>
            <person name="Moreno S."/>
            <person name="Armstrong J."/>
            <person name="Forsburg S.L."/>
            <person name="Cerutti L."/>
            <person name="Lowe T."/>
            <person name="McCombie W.R."/>
            <person name="Paulsen I."/>
            <person name="Potashkin J."/>
            <person name="Shpakovski G.V."/>
            <person name="Ussery D."/>
            <person name="Barrell B.G."/>
            <person name="Nurse P."/>
        </authorList>
    </citation>
    <scope>NUCLEOTIDE SEQUENCE [LARGE SCALE GENOMIC DNA]</scope>
    <source>
        <strain>972 / ATCC 24843</strain>
    </source>
</reference>
<reference key="4">
    <citation type="journal article" date="2005" name="Genes Dev.">
        <title>A Rik1-associated, cullin-dependent E3 ubiquitin ligase is essential for heterochromatin formation.</title>
        <authorList>
            <person name="Horn P.J."/>
            <person name="Bastie J.-N."/>
            <person name="Peterson C.L."/>
        </authorList>
    </citation>
    <scope>PARTIAL PROTEIN SEQUENCE</scope>
    <scope>INTERACTION WITH RIK1</scope>
</reference>
<reference key="5">
    <citation type="journal article" date="2006" name="EMBO J.">
        <title>Histone H2B mutations in inner region affect ubiquitination, centromere function, silencing and chromosome segregation.</title>
        <authorList>
            <person name="Maruyama T."/>
            <person name="Nakamura T."/>
            <person name="Hayashi T."/>
            <person name="Yanagida M."/>
        </authorList>
    </citation>
    <scope>MUTAGENESIS OF GLU-35; GLY-53; PRO-103 AND LYS-120</scope>
    <scope>UBIQUITINATION AT LYS-120</scope>
</reference>
<reference key="6">
    <citation type="journal article" date="2006" name="Nat. Biotechnol.">
        <title>ORFeome cloning and global analysis of protein localization in the fission yeast Schizosaccharomyces pombe.</title>
        <authorList>
            <person name="Matsuyama A."/>
            <person name="Arai R."/>
            <person name="Yashiroda Y."/>
            <person name="Shirai A."/>
            <person name="Kamata A."/>
            <person name="Sekido S."/>
            <person name="Kobayashi Y."/>
            <person name="Hashimoto A."/>
            <person name="Hamamoto M."/>
            <person name="Hiraoka Y."/>
            <person name="Horinouchi S."/>
            <person name="Yoshida M."/>
        </authorList>
    </citation>
    <scope>SUBCELLULAR LOCATION [LARGE SCALE ANALYSIS]</scope>
</reference>
<organism>
    <name type="scientific">Schizosaccharomyces pombe (strain 972 / ATCC 24843)</name>
    <name type="common">Fission yeast</name>
    <dbReference type="NCBI Taxonomy" id="284812"/>
    <lineage>
        <taxon>Eukaryota</taxon>
        <taxon>Fungi</taxon>
        <taxon>Dikarya</taxon>
        <taxon>Ascomycota</taxon>
        <taxon>Taphrinomycotina</taxon>
        <taxon>Schizosaccharomycetes</taxon>
        <taxon>Schizosaccharomycetales</taxon>
        <taxon>Schizosaccharomycetaceae</taxon>
        <taxon>Schizosaccharomyces</taxon>
    </lineage>
</organism>
<dbReference type="EMBL" id="M11494">
    <property type="protein sequence ID" value="AAA35312.1"/>
    <property type="molecule type" value="Genomic_DNA"/>
</dbReference>
<dbReference type="EMBL" id="X05220">
    <property type="protein sequence ID" value="CAA28847.1"/>
    <property type="molecule type" value="Genomic_DNA"/>
</dbReference>
<dbReference type="EMBL" id="CU329672">
    <property type="protein sequence ID" value="CAA21865.1"/>
    <property type="molecule type" value="Genomic_DNA"/>
</dbReference>
<dbReference type="PIR" id="A27399">
    <property type="entry name" value="HSZPB2"/>
</dbReference>
<dbReference type="RefSeq" id="NP_588181.1">
    <property type="nucleotide sequence ID" value="NM_001023171.2"/>
</dbReference>
<dbReference type="PDB" id="7YBF">
    <property type="method" value="X-ray"/>
    <property type="resolution" value="2.15 A"/>
    <property type="chains" value="A/B=32-126"/>
</dbReference>
<dbReference type="PDBsum" id="7YBF"/>
<dbReference type="SMR" id="P04913"/>
<dbReference type="BioGRID" id="276085">
    <property type="interactions" value="42"/>
</dbReference>
<dbReference type="FunCoup" id="P04913">
    <property type="interactions" value="271"/>
</dbReference>
<dbReference type="IntAct" id="P04913">
    <property type="interactions" value="1"/>
</dbReference>
<dbReference type="STRING" id="284812.P04913"/>
<dbReference type="iPTMnet" id="P04913"/>
<dbReference type="SwissPalm" id="P04913"/>
<dbReference type="PaxDb" id="4896-SPCC622.09.1"/>
<dbReference type="EnsemblFungi" id="SPCC622.09.1">
    <property type="protein sequence ID" value="SPCC622.09.1:pep"/>
    <property type="gene ID" value="SPCC622.09"/>
</dbReference>
<dbReference type="GeneID" id="2539523"/>
<dbReference type="KEGG" id="spo:2539523"/>
<dbReference type="PomBase" id="SPCC622.09">
    <property type="gene designation" value="htb1"/>
</dbReference>
<dbReference type="VEuPathDB" id="FungiDB:SPCC622.09"/>
<dbReference type="eggNOG" id="KOG1744">
    <property type="taxonomic scope" value="Eukaryota"/>
</dbReference>
<dbReference type="HOGENOM" id="CLU_075666_2_1_1"/>
<dbReference type="InParanoid" id="P04913"/>
<dbReference type="OMA" id="AQLCQTT"/>
<dbReference type="PhylomeDB" id="P04913"/>
<dbReference type="Reactome" id="R-SPO-2299718">
    <property type="pathway name" value="Condensation of Prophase Chromosomes"/>
</dbReference>
<dbReference type="Reactome" id="R-SPO-2559580">
    <property type="pathway name" value="Oxidative Stress Induced Senescence"/>
</dbReference>
<dbReference type="Reactome" id="R-SPO-3214815">
    <property type="pathway name" value="HDACs deacetylate histones"/>
</dbReference>
<dbReference type="Reactome" id="R-SPO-3214847">
    <property type="pathway name" value="HATs acetylate histones"/>
</dbReference>
<dbReference type="Reactome" id="R-SPO-427359">
    <property type="pathway name" value="SIRT1 negatively regulates rRNA expression"/>
</dbReference>
<dbReference type="Reactome" id="R-SPO-5578749">
    <property type="pathway name" value="Transcriptional regulation by small RNAs"/>
</dbReference>
<dbReference type="Reactome" id="R-SPO-5625886">
    <property type="pathway name" value="Activated PKN1 stimulates transcription of AR (androgen receptor) regulated genes KLK2 and KLK3"/>
</dbReference>
<dbReference type="Reactome" id="R-SPO-5689880">
    <property type="pathway name" value="Ub-specific processing proteases"/>
</dbReference>
<dbReference type="Reactome" id="R-SPO-5693565">
    <property type="pathway name" value="Recruitment and ATM-mediated phosphorylation of repair and signaling proteins at DNA double strand breaks"/>
</dbReference>
<dbReference type="Reactome" id="R-SPO-68616">
    <property type="pathway name" value="Assembly of the ORC complex at the origin of replication"/>
</dbReference>
<dbReference type="Reactome" id="R-SPO-73772">
    <property type="pathway name" value="RNA Polymerase I Promoter Escape"/>
</dbReference>
<dbReference type="Reactome" id="R-SPO-9018519">
    <property type="pathway name" value="Estrogen-dependent gene expression"/>
</dbReference>
<dbReference type="PRO" id="PR:P04913"/>
<dbReference type="Proteomes" id="UP000002485">
    <property type="component" value="Chromosome III"/>
</dbReference>
<dbReference type="GO" id="GO:0000786">
    <property type="term" value="C:nucleosome"/>
    <property type="evidence" value="ECO:0000255"/>
    <property type="project" value="PomBase"/>
</dbReference>
<dbReference type="GO" id="GO:0005634">
    <property type="term" value="C:nucleus"/>
    <property type="evidence" value="ECO:0007005"/>
    <property type="project" value="PomBase"/>
</dbReference>
<dbReference type="GO" id="GO:0035861">
    <property type="term" value="C:site of double-strand break"/>
    <property type="evidence" value="ECO:0000314"/>
    <property type="project" value="PomBase"/>
</dbReference>
<dbReference type="GO" id="GO:0140463">
    <property type="term" value="F:chromatin-protein adaptor activity"/>
    <property type="evidence" value="ECO:0000269"/>
    <property type="project" value="PomBase"/>
</dbReference>
<dbReference type="GO" id="GO:0003677">
    <property type="term" value="F:DNA binding"/>
    <property type="evidence" value="ECO:0000318"/>
    <property type="project" value="GO_Central"/>
</dbReference>
<dbReference type="GO" id="GO:0046982">
    <property type="term" value="F:protein heterodimerization activity"/>
    <property type="evidence" value="ECO:0007669"/>
    <property type="project" value="InterPro"/>
</dbReference>
<dbReference type="GO" id="GO:0030527">
    <property type="term" value="F:structural constituent of chromatin"/>
    <property type="evidence" value="ECO:0007669"/>
    <property type="project" value="InterPro"/>
</dbReference>
<dbReference type="GO" id="GO:0006338">
    <property type="term" value="P:chromatin remodeling"/>
    <property type="evidence" value="ECO:0000303"/>
    <property type="project" value="PomBase"/>
</dbReference>
<dbReference type="GO" id="GO:0000724">
    <property type="term" value="P:double-strand break repair via homologous recombination"/>
    <property type="evidence" value="ECO:0000269"/>
    <property type="project" value="PomBase"/>
</dbReference>
<dbReference type="CDD" id="cd22910">
    <property type="entry name" value="HFD_H2B"/>
    <property type="match status" value="1"/>
</dbReference>
<dbReference type="FunFam" id="1.10.20.10:FF:000014">
    <property type="entry name" value="Histone H2B"/>
    <property type="match status" value="1"/>
</dbReference>
<dbReference type="Gene3D" id="1.10.20.10">
    <property type="entry name" value="Histone, subunit A"/>
    <property type="match status" value="1"/>
</dbReference>
<dbReference type="InterPro" id="IPR009072">
    <property type="entry name" value="Histone-fold"/>
</dbReference>
<dbReference type="InterPro" id="IPR007125">
    <property type="entry name" value="Histone_H2A/H2B/H3"/>
</dbReference>
<dbReference type="InterPro" id="IPR000558">
    <property type="entry name" value="Histone_H2B"/>
</dbReference>
<dbReference type="InterPro" id="IPR055333">
    <property type="entry name" value="HISTONE_H2B_site"/>
</dbReference>
<dbReference type="PANTHER" id="PTHR23428">
    <property type="entry name" value="HISTONE H2B"/>
    <property type="match status" value="1"/>
</dbReference>
<dbReference type="Pfam" id="PF00125">
    <property type="entry name" value="Histone"/>
    <property type="match status" value="1"/>
</dbReference>
<dbReference type="PRINTS" id="PR00621">
    <property type="entry name" value="HISTONEH2B"/>
</dbReference>
<dbReference type="SMART" id="SM00427">
    <property type="entry name" value="H2B"/>
    <property type="match status" value="1"/>
</dbReference>
<dbReference type="SUPFAM" id="SSF47113">
    <property type="entry name" value="Histone-fold"/>
    <property type="match status" value="1"/>
</dbReference>
<dbReference type="PROSITE" id="PS00357">
    <property type="entry name" value="HISTONE_H2B"/>
    <property type="match status" value="1"/>
</dbReference>
<accession>P04913</accession>
<proteinExistence type="evidence at protein level"/>